<sequence length="122" mass="13352">MIQQQTMLTVADNTGARKLMCIRVLGSSGRRYASLGDVIVGVVKDALPNMPVKKSDVVKAVVIRTVDTVRRPDGMCIRFDDNAAVIINDDGNPRGTRVFGPVARELREKNFTKIISLAPEVL</sequence>
<keyword id="KW-0687">Ribonucleoprotein</keyword>
<keyword id="KW-0689">Ribosomal protein</keyword>
<keyword id="KW-0694">RNA-binding</keyword>
<keyword id="KW-0699">rRNA-binding</keyword>
<protein>
    <recommendedName>
        <fullName evidence="1">Large ribosomal subunit protein uL14</fullName>
    </recommendedName>
    <alternativeName>
        <fullName evidence="2">50S ribosomal protein L14</fullName>
    </alternativeName>
</protein>
<name>RL14_SYNJA</name>
<reference key="1">
    <citation type="journal article" date="2007" name="ISME J.">
        <title>Population level functional diversity in a microbial community revealed by comparative genomic and metagenomic analyses.</title>
        <authorList>
            <person name="Bhaya D."/>
            <person name="Grossman A.R."/>
            <person name="Steunou A.-S."/>
            <person name="Khuri N."/>
            <person name="Cohan F.M."/>
            <person name="Hamamura N."/>
            <person name="Melendrez M.C."/>
            <person name="Bateson M.M."/>
            <person name="Ward D.M."/>
            <person name="Heidelberg J.F."/>
        </authorList>
    </citation>
    <scope>NUCLEOTIDE SEQUENCE [LARGE SCALE GENOMIC DNA]</scope>
    <source>
        <strain>JA-3-3Ab</strain>
    </source>
</reference>
<comment type="function">
    <text evidence="1">Binds to 23S rRNA. Forms part of two intersubunit bridges in the 70S ribosome.</text>
</comment>
<comment type="subunit">
    <text evidence="1">Part of the 50S ribosomal subunit. Forms a cluster with proteins L3 and L19. In the 70S ribosome, L14 and L19 interact and together make contacts with the 16S rRNA in bridges B5 and B8.</text>
</comment>
<comment type="similarity">
    <text evidence="1">Belongs to the universal ribosomal protein uL14 family.</text>
</comment>
<proteinExistence type="inferred from homology"/>
<accession>Q2JV91</accession>
<evidence type="ECO:0000255" key="1">
    <source>
        <dbReference type="HAMAP-Rule" id="MF_01367"/>
    </source>
</evidence>
<evidence type="ECO:0000305" key="2"/>
<dbReference type="EMBL" id="CP000239">
    <property type="protein sequence ID" value="ABC99356.1"/>
    <property type="molecule type" value="Genomic_DNA"/>
</dbReference>
<dbReference type="RefSeq" id="WP_011430037.1">
    <property type="nucleotide sequence ID" value="NC_007775.1"/>
</dbReference>
<dbReference type="SMR" id="Q2JV91"/>
<dbReference type="STRING" id="321327.CYA_1168"/>
<dbReference type="KEGG" id="cya:CYA_1168"/>
<dbReference type="eggNOG" id="COG0093">
    <property type="taxonomic scope" value="Bacteria"/>
</dbReference>
<dbReference type="HOGENOM" id="CLU_095071_2_1_3"/>
<dbReference type="OrthoDB" id="9806379at2"/>
<dbReference type="Proteomes" id="UP000008818">
    <property type="component" value="Chromosome"/>
</dbReference>
<dbReference type="GO" id="GO:0022625">
    <property type="term" value="C:cytosolic large ribosomal subunit"/>
    <property type="evidence" value="ECO:0007669"/>
    <property type="project" value="TreeGrafter"/>
</dbReference>
<dbReference type="GO" id="GO:0070180">
    <property type="term" value="F:large ribosomal subunit rRNA binding"/>
    <property type="evidence" value="ECO:0007669"/>
    <property type="project" value="TreeGrafter"/>
</dbReference>
<dbReference type="GO" id="GO:0003735">
    <property type="term" value="F:structural constituent of ribosome"/>
    <property type="evidence" value="ECO:0007669"/>
    <property type="project" value="InterPro"/>
</dbReference>
<dbReference type="GO" id="GO:0006412">
    <property type="term" value="P:translation"/>
    <property type="evidence" value="ECO:0007669"/>
    <property type="project" value="UniProtKB-UniRule"/>
</dbReference>
<dbReference type="CDD" id="cd00337">
    <property type="entry name" value="Ribosomal_uL14"/>
    <property type="match status" value="1"/>
</dbReference>
<dbReference type="FunFam" id="2.40.150.20:FF:000001">
    <property type="entry name" value="50S ribosomal protein L14"/>
    <property type="match status" value="1"/>
</dbReference>
<dbReference type="Gene3D" id="2.40.150.20">
    <property type="entry name" value="Ribosomal protein L14"/>
    <property type="match status" value="1"/>
</dbReference>
<dbReference type="HAMAP" id="MF_01367">
    <property type="entry name" value="Ribosomal_uL14"/>
    <property type="match status" value="1"/>
</dbReference>
<dbReference type="InterPro" id="IPR000218">
    <property type="entry name" value="Ribosomal_uL14"/>
</dbReference>
<dbReference type="InterPro" id="IPR005745">
    <property type="entry name" value="Ribosomal_uL14_bac-type"/>
</dbReference>
<dbReference type="InterPro" id="IPR019972">
    <property type="entry name" value="Ribosomal_uL14_CS"/>
</dbReference>
<dbReference type="InterPro" id="IPR036853">
    <property type="entry name" value="Ribosomal_uL14_sf"/>
</dbReference>
<dbReference type="NCBIfam" id="TIGR01067">
    <property type="entry name" value="rplN_bact"/>
    <property type="match status" value="1"/>
</dbReference>
<dbReference type="PANTHER" id="PTHR11761">
    <property type="entry name" value="50S/60S RIBOSOMAL PROTEIN L14/L23"/>
    <property type="match status" value="1"/>
</dbReference>
<dbReference type="PANTHER" id="PTHR11761:SF3">
    <property type="entry name" value="LARGE RIBOSOMAL SUBUNIT PROTEIN UL14M"/>
    <property type="match status" value="1"/>
</dbReference>
<dbReference type="Pfam" id="PF00238">
    <property type="entry name" value="Ribosomal_L14"/>
    <property type="match status" value="1"/>
</dbReference>
<dbReference type="SMART" id="SM01374">
    <property type="entry name" value="Ribosomal_L14"/>
    <property type="match status" value="1"/>
</dbReference>
<dbReference type="SUPFAM" id="SSF50193">
    <property type="entry name" value="Ribosomal protein L14"/>
    <property type="match status" value="1"/>
</dbReference>
<dbReference type="PROSITE" id="PS00049">
    <property type="entry name" value="RIBOSOMAL_L14"/>
    <property type="match status" value="1"/>
</dbReference>
<gene>
    <name evidence="1" type="primary">rplN</name>
    <name evidence="1" type="synonym">rpl14</name>
    <name type="ordered locus">CYA_1168</name>
</gene>
<organism>
    <name type="scientific">Synechococcus sp. (strain JA-3-3Ab)</name>
    <name type="common">Cyanobacteria bacterium Yellowstone A-Prime</name>
    <dbReference type="NCBI Taxonomy" id="321327"/>
    <lineage>
        <taxon>Bacteria</taxon>
        <taxon>Bacillati</taxon>
        <taxon>Cyanobacteriota</taxon>
        <taxon>Cyanophyceae</taxon>
        <taxon>Synechococcales</taxon>
        <taxon>Synechococcaceae</taxon>
        <taxon>Synechococcus</taxon>
    </lineage>
</organism>
<feature type="chain" id="PRO_0000266571" description="Large ribosomal subunit protein uL14">
    <location>
        <begin position="1"/>
        <end position="122"/>
    </location>
</feature>